<reference key="1">
    <citation type="journal article" date="2008" name="J. Bacteriol.">
        <title>Genome sequence of Lactobacillus helveticus: an organism distinguished by selective gene loss and IS element expansion.</title>
        <authorList>
            <person name="Callanan M."/>
            <person name="Kaleta P."/>
            <person name="O'Callaghan J."/>
            <person name="O'Sullivan O."/>
            <person name="Jordan K."/>
            <person name="McAuliffe O."/>
            <person name="Sangrador-Vegas A."/>
            <person name="Slattery L."/>
            <person name="Fitzgerald G.F."/>
            <person name="Beresford T."/>
            <person name="Ross R.P."/>
        </authorList>
    </citation>
    <scope>NUCLEOTIDE SEQUENCE [LARGE SCALE GENOMIC DNA]</scope>
    <source>
        <strain>DPC 4571</strain>
    </source>
</reference>
<sequence>MAILEQPYLDLLQKIMSEGHGKDDRTGTGTRSYFGAQMRFDLSQGFPLLTTKKVPFGLIKSELLWFLRGDTNIRFLLEHNNHIWDEWAFKNWVNSSEYQGPDMTDFGLRSQSDPEFNKIYQAEMKKFDQRILDDEDFAKKYGNLGDVYGAQWRHWEKREGGFIDQIADVIKQIKETPDSRRMIVTAWNPEDVPTSALPPCHVMFQFYVVDGKISVQLYQRSGDMFLGVPFNIASYSLLLNLIARETGLQVGEFIHTLGDAHIYRNHLKQVEELLSRKPYDSPQLWLNPEKKNIADFEMKDIKVVDYQHHGTIKAPVAV</sequence>
<feature type="chain" id="PRO_1000070925" description="Thymidylate synthase">
    <location>
        <begin position="1"/>
        <end position="318"/>
    </location>
</feature>
<feature type="active site" description="Nucleophile" evidence="1">
    <location>
        <position position="200"/>
    </location>
</feature>
<feature type="binding site" description="in other chain" evidence="1">
    <location>
        <position position="25"/>
    </location>
    <ligand>
        <name>dUMP</name>
        <dbReference type="ChEBI" id="CHEBI:246422"/>
        <note>ligand shared between dimeric partners</note>
    </ligand>
</feature>
<feature type="binding site" evidence="1">
    <location>
        <begin position="180"/>
        <end position="181"/>
    </location>
    <ligand>
        <name>dUMP</name>
        <dbReference type="ChEBI" id="CHEBI:246422"/>
        <note>ligand shared between dimeric partners</note>
    </ligand>
</feature>
<feature type="binding site" description="in other chain" evidence="1">
    <location>
        <begin position="220"/>
        <end position="223"/>
    </location>
    <ligand>
        <name>dUMP</name>
        <dbReference type="ChEBI" id="CHEBI:246422"/>
        <note>ligand shared between dimeric partners</note>
    </ligand>
</feature>
<feature type="binding site" evidence="1">
    <location>
        <position position="223"/>
    </location>
    <ligand>
        <name>(6R)-5,10-methylene-5,6,7,8-tetrahydrofolate</name>
        <dbReference type="ChEBI" id="CHEBI:15636"/>
    </ligand>
</feature>
<feature type="binding site" description="in other chain" evidence="1">
    <location>
        <position position="231"/>
    </location>
    <ligand>
        <name>dUMP</name>
        <dbReference type="ChEBI" id="CHEBI:246422"/>
        <note>ligand shared between dimeric partners</note>
    </ligand>
</feature>
<feature type="binding site" description="in other chain" evidence="1">
    <location>
        <begin position="261"/>
        <end position="263"/>
    </location>
    <ligand>
        <name>dUMP</name>
        <dbReference type="ChEBI" id="CHEBI:246422"/>
        <note>ligand shared between dimeric partners</note>
    </ligand>
</feature>
<feature type="binding site" evidence="1">
    <location>
        <position position="317"/>
    </location>
    <ligand>
        <name>(6R)-5,10-methylene-5,6,7,8-tetrahydrofolate</name>
        <dbReference type="ChEBI" id="CHEBI:15636"/>
    </ligand>
</feature>
<proteinExistence type="inferred from homology"/>
<gene>
    <name evidence="1" type="primary">thyA</name>
    <name type="ordered locus">lhv_0955</name>
</gene>
<accession>A8YUW0</accession>
<evidence type="ECO:0000255" key="1">
    <source>
        <dbReference type="HAMAP-Rule" id="MF_00008"/>
    </source>
</evidence>
<organism>
    <name type="scientific">Lactobacillus helveticus (strain DPC 4571)</name>
    <dbReference type="NCBI Taxonomy" id="405566"/>
    <lineage>
        <taxon>Bacteria</taxon>
        <taxon>Bacillati</taxon>
        <taxon>Bacillota</taxon>
        <taxon>Bacilli</taxon>
        <taxon>Lactobacillales</taxon>
        <taxon>Lactobacillaceae</taxon>
        <taxon>Lactobacillus</taxon>
    </lineage>
</organism>
<comment type="function">
    <text evidence="1">Catalyzes the reductive methylation of 2'-deoxyuridine-5'-monophosphate (dUMP) to 2'-deoxythymidine-5'-monophosphate (dTMP) while utilizing 5,10-methylenetetrahydrofolate (mTHF) as the methyl donor and reductant in the reaction, yielding dihydrofolate (DHF) as a by-product. This enzymatic reaction provides an intracellular de novo source of dTMP, an essential precursor for DNA biosynthesis.</text>
</comment>
<comment type="catalytic activity">
    <reaction evidence="1">
        <text>dUMP + (6R)-5,10-methylene-5,6,7,8-tetrahydrofolate = 7,8-dihydrofolate + dTMP</text>
        <dbReference type="Rhea" id="RHEA:12104"/>
        <dbReference type="ChEBI" id="CHEBI:15636"/>
        <dbReference type="ChEBI" id="CHEBI:57451"/>
        <dbReference type="ChEBI" id="CHEBI:63528"/>
        <dbReference type="ChEBI" id="CHEBI:246422"/>
        <dbReference type="EC" id="2.1.1.45"/>
    </reaction>
</comment>
<comment type="pathway">
    <text evidence="1">Pyrimidine metabolism; dTTP biosynthesis.</text>
</comment>
<comment type="subunit">
    <text evidence="1">Homodimer.</text>
</comment>
<comment type="subcellular location">
    <subcellularLocation>
        <location evidence="1">Cytoplasm</location>
    </subcellularLocation>
</comment>
<comment type="similarity">
    <text evidence="1">Belongs to the thymidylate synthase family. Bacterial-type ThyA subfamily.</text>
</comment>
<protein>
    <recommendedName>
        <fullName evidence="1">Thymidylate synthase</fullName>
        <shortName evidence="1">TS</shortName>
        <shortName evidence="1">TSase</shortName>
        <ecNumber evidence="1">2.1.1.45</ecNumber>
    </recommendedName>
</protein>
<name>TYSY_LACH4</name>
<keyword id="KW-0963">Cytoplasm</keyword>
<keyword id="KW-0489">Methyltransferase</keyword>
<keyword id="KW-0545">Nucleotide biosynthesis</keyword>
<keyword id="KW-0808">Transferase</keyword>
<dbReference type="EC" id="2.1.1.45" evidence="1"/>
<dbReference type="EMBL" id="CP000517">
    <property type="protein sequence ID" value="ABX27048.1"/>
    <property type="molecule type" value="Genomic_DNA"/>
</dbReference>
<dbReference type="RefSeq" id="WP_003626673.1">
    <property type="nucleotide sequence ID" value="NC_010080.1"/>
</dbReference>
<dbReference type="SMR" id="A8YUW0"/>
<dbReference type="KEGG" id="lhe:lhv_0955"/>
<dbReference type="eggNOG" id="COG0207">
    <property type="taxonomic scope" value="Bacteria"/>
</dbReference>
<dbReference type="HOGENOM" id="CLU_021669_0_0_9"/>
<dbReference type="UniPathway" id="UPA00575"/>
<dbReference type="Proteomes" id="UP000000790">
    <property type="component" value="Chromosome"/>
</dbReference>
<dbReference type="GO" id="GO:0005829">
    <property type="term" value="C:cytosol"/>
    <property type="evidence" value="ECO:0007669"/>
    <property type="project" value="TreeGrafter"/>
</dbReference>
<dbReference type="GO" id="GO:0004799">
    <property type="term" value="F:thymidylate synthase activity"/>
    <property type="evidence" value="ECO:0007669"/>
    <property type="project" value="UniProtKB-UniRule"/>
</dbReference>
<dbReference type="GO" id="GO:0006231">
    <property type="term" value="P:dTMP biosynthetic process"/>
    <property type="evidence" value="ECO:0007669"/>
    <property type="project" value="UniProtKB-UniRule"/>
</dbReference>
<dbReference type="GO" id="GO:0006235">
    <property type="term" value="P:dTTP biosynthetic process"/>
    <property type="evidence" value="ECO:0007669"/>
    <property type="project" value="UniProtKB-UniRule"/>
</dbReference>
<dbReference type="GO" id="GO:0032259">
    <property type="term" value="P:methylation"/>
    <property type="evidence" value="ECO:0007669"/>
    <property type="project" value="UniProtKB-KW"/>
</dbReference>
<dbReference type="CDD" id="cd00351">
    <property type="entry name" value="TS_Pyrimidine_HMase"/>
    <property type="match status" value="1"/>
</dbReference>
<dbReference type="Gene3D" id="3.30.572.10">
    <property type="entry name" value="Thymidylate synthase/dCMP hydroxymethylase domain"/>
    <property type="match status" value="1"/>
</dbReference>
<dbReference type="HAMAP" id="MF_00008">
    <property type="entry name" value="Thymidy_synth_bact"/>
    <property type="match status" value="1"/>
</dbReference>
<dbReference type="InterPro" id="IPR045097">
    <property type="entry name" value="Thymidate_synth/dCMP_Mease"/>
</dbReference>
<dbReference type="InterPro" id="IPR023451">
    <property type="entry name" value="Thymidate_synth/dCMP_Mease_dom"/>
</dbReference>
<dbReference type="InterPro" id="IPR036926">
    <property type="entry name" value="Thymidate_synth/dCMP_Mease_sf"/>
</dbReference>
<dbReference type="InterPro" id="IPR000398">
    <property type="entry name" value="Thymidylate_synthase"/>
</dbReference>
<dbReference type="InterPro" id="IPR020940">
    <property type="entry name" value="Thymidylate_synthase_AS"/>
</dbReference>
<dbReference type="NCBIfam" id="NF002496">
    <property type="entry name" value="PRK01827.1-2"/>
    <property type="match status" value="1"/>
</dbReference>
<dbReference type="NCBIfam" id="TIGR03284">
    <property type="entry name" value="thym_sym"/>
    <property type="match status" value="1"/>
</dbReference>
<dbReference type="PANTHER" id="PTHR11548:SF9">
    <property type="entry name" value="THYMIDYLATE SYNTHASE"/>
    <property type="match status" value="1"/>
</dbReference>
<dbReference type="PANTHER" id="PTHR11548">
    <property type="entry name" value="THYMIDYLATE SYNTHASE 1"/>
    <property type="match status" value="1"/>
</dbReference>
<dbReference type="Pfam" id="PF00303">
    <property type="entry name" value="Thymidylat_synt"/>
    <property type="match status" value="1"/>
</dbReference>
<dbReference type="PRINTS" id="PR00108">
    <property type="entry name" value="THYMDSNTHASE"/>
</dbReference>
<dbReference type="SUPFAM" id="SSF55831">
    <property type="entry name" value="Thymidylate synthase/dCMP hydroxymethylase"/>
    <property type="match status" value="1"/>
</dbReference>
<dbReference type="PROSITE" id="PS00091">
    <property type="entry name" value="THYMIDYLATE_SYNTHASE"/>
    <property type="match status" value="1"/>
</dbReference>